<protein>
    <recommendedName>
        <fullName>Probable exopolygalacturonase X</fullName>
        <shortName>ExoPG</shortName>
        <ecNumber>3.2.1.67</ecNumber>
    </recommendedName>
    <alternativeName>
        <fullName>Galacturan 1,4-alpha-galacturonidase</fullName>
    </alternativeName>
    <alternativeName>
        <fullName>Poly(1,4-alpha-D-galacturonide)galacturonohydrolase</fullName>
    </alternativeName>
</protein>
<dbReference type="EC" id="3.2.1.67"/>
<dbReference type="EMBL" id="AM270279">
    <property type="protein sequence ID" value="CAK46374.1"/>
    <property type="molecule type" value="Genomic_DNA"/>
</dbReference>
<dbReference type="RefSeq" id="XP_001395799.1">
    <property type="nucleotide sequence ID" value="XM_001395762.1"/>
</dbReference>
<dbReference type="SMR" id="A2R060"/>
<dbReference type="CAZy" id="GH28">
    <property type="family name" value="Glycoside Hydrolase Family 28"/>
</dbReference>
<dbReference type="GlyCosmos" id="A2R060">
    <property type="glycosylation" value="12 sites, No reported glycans"/>
</dbReference>
<dbReference type="EnsemblFungi" id="CAK46374">
    <property type="protein sequence ID" value="CAK46374"/>
    <property type="gene ID" value="An12g07500"/>
</dbReference>
<dbReference type="GeneID" id="4986099"/>
<dbReference type="KEGG" id="ang:An12g07500"/>
<dbReference type="VEuPathDB" id="FungiDB:An12g07500"/>
<dbReference type="HOGENOM" id="CLU_016031_1_0_1"/>
<dbReference type="Proteomes" id="UP000006706">
    <property type="component" value="Chromosome 3L"/>
</dbReference>
<dbReference type="GO" id="GO:0005576">
    <property type="term" value="C:extracellular region"/>
    <property type="evidence" value="ECO:0000250"/>
    <property type="project" value="UniProtKB"/>
</dbReference>
<dbReference type="GO" id="GO:0047911">
    <property type="term" value="F:galacturan 1,4-alpha-galacturonidase activity"/>
    <property type="evidence" value="ECO:0007669"/>
    <property type="project" value="UniProtKB-EC"/>
</dbReference>
<dbReference type="GO" id="GO:0004650">
    <property type="term" value="F:polygalacturonase activity"/>
    <property type="evidence" value="ECO:0000250"/>
    <property type="project" value="UniProtKB"/>
</dbReference>
<dbReference type="GO" id="GO:0071555">
    <property type="term" value="P:cell wall organization"/>
    <property type="evidence" value="ECO:0007669"/>
    <property type="project" value="UniProtKB-KW"/>
</dbReference>
<dbReference type="GO" id="GO:0045490">
    <property type="term" value="P:pectin catabolic process"/>
    <property type="evidence" value="ECO:0000250"/>
    <property type="project" value="UniProtKB"/>
</dbReference>
<dbReference type="FunFam" id="2.160.20.10:FF:000027">
    <property type="entry name" value="Probable exopolygalacturonase X"/>
    <property type="match status" value="1"/>
</dbReference>
<dbReference type="Gene3D" id="2.160.20.10">
    <property type="entry name" value="Single-stranded right-handed beta-helix, Pectin lyase-like"/>
    <property type="match status" value="1"/>
</dbReference>
<dbReference type="InterPro" id="IPR000743">
    <property type="entry name" value="Glyco_hydro_28"/>
</dbReference>
<dbReference type="InterPro" id="IPR012334">
    <property type="entry name" value="Pectin_lyas_fold"/>
</dbReference>
<dbReference type="InterPro" id="IPR011050">
    <property type="entry name" value="Pectin_lyase_fold/virulence"/>
</dbReference>
<dbReference type="PANTHER" id="PTHR31736">
    <property type="match status" value="1"/>
</dbReference>
<dbReference type="PANTHER" id="PTHR31736:SF14">
    <property type="entry name" value="EXOPOLYGALACTURONASE X-1-RELATED"/>
    <property type="match status" value="1"/>
</dbReference>
<dbReference type="Pfam" id="PF00295">
    <property type="entry name" value="Glyco_hydro_28"/>
    <property type="match status" value="1"/>
</dbReference>
<dbReference type="SUPFAM" id="SSF51126">
    <property type="entry name" value="Pectin lyase-like"/>
    <property type="match status" value="1"/>
</dbReference>
<dbReference type="PROSITE" id="PS00502">
    <property type="entry name" value="POLYGALACTURONASE"/>
    <property type="match status" value="1"/>
</dbReference>
<evidence type="ECO:0000250" key="1"/>
<evidence type="ECO:0000255" key="2"/>
<evidence type="ECO:0000255" key="3">
    <source>
        <dbReference type="PROSITE-ProRule" id="PRU10052"/>
    </source>
</evidence>
<evidence type="ECO:0000256" key="4">
    <source>
        <dbReference type="SAM" id="MobiDB-lite"/>
    </source>
</evidence>
<evidence type="ECO:0000305" key="5"/>
<sequence>MRLTHVLSHTLGLLALGATAEAFSRSREAACSPKKPFRPLPTSSSRDKTCHVRSHGDGSDDSDYILSALHQCNHGGKVVFDEDKEYIIGTALNMTFLKNIDLEVLGTILFTNDTDYWQANSFKQGFQNATTFFQLGGEDVNMYGGGTINGNGQVWYDLYAEDDLILRPILMGIIGLNGGTIGPLKLRYSPQYYHFVANSSNVLFDGIDISGYSKSDNEAKNTDGWDTYRSNNIVIQNSVINNGDDCVSFKPNSTNILVQNLHCNGSHGISVGSLGQYKDEVDIVENVYVYNISMFNASDMARIKVWPGTPSALSADLQGGGGSGSVKNITYDTALIDNVDWAIEITQCYGQKNTTLCNEYPSSLTISDVHIKNFRGTTSGSEDPYVGTIVCSSPDTCSDIYTSNINVTSPDGTNDFVCDNVDESLLSVNCTATSD</sequence>
<comment type="function">
    <text evidence="1">Specific in hydrolyzing the terminal glycosidic bond of polygalacturonic acid and oligogalacturonates.</text>
</comment>
<comment type="catalytic activity">
    <reaction>
        <text>[(1-&gt;4)-alpha-D-galacturonosyl](n) + H2O = alpha-D-galacturonate + [(1-&gt;4)-alpha-D-galacturonosyl](n-1)</text>
        <dbReference type="Rhea" id="RHEA:14117"/>
        <dbReference type="Rhea" id="RHEA-COMP:14570"/>
        <dbReference type="Rhea" id="RHEA-COMP:14572"/>
        <dbReference type="ChEBI" id="CHEBI:15377"/>
        <dbReference type="ChEBI" id="CHEBI:58658"/>
        <dbReference type="ChEBI" id="CHEBI:140523"/>
        <dbReference type="EC" id="3.2.1.67"/>
    </reaction>
</comment>
<comment type="subcellular location">
    <subcellularLocation>
        <location evidence="1">Secreted</location>
    </subcellularLocation>
</comment>
<comment type="similarity">
    <text evidence="5">Belongs to the glycosyl hydrolase 28 family.</text>
</comment>
<name>PGLRX_ASPNC</name>
<organism>
    <name type="scientific">Aspergillus niger (strain ATCC MYA-4892 / CBS 513.88 / FGSC A1513)</name>
    <dbReference type="NCBI Taxonomy" id="425011"/>
    <lineage>
        <taxon>Eukaryota</taxon>
        <taxon>Fungi</taxon>
        <taxon>Dikarya</taxon>
        <taxon>Ascomycota</taxon>
        <taxon>Pezizomycotina</taxon>
        <taxon>Eurotiomycetes</taxon>
        <taxon>Eurotiomycetidae</taxon>
        <taxon>Eurotiales</taxon>
        <taxon>Aspergillaceae</taxon>
        <taxon>Aspergillus</taxon>
        <taxon>Aspergillus subgen. Circumdati</taxon>
    </lineage>
</organism>
<gene>
    <name type="primary">pgaX</name>
    <name type="ORF">An12g07500</name>
</gene>
<accession>A2R060</accession>
<proteinExistence type="inferred from homology"/>
<reference key="1">
    <citation type="journal article" date="2007" name="Nat. Biotechnol.">
        <title>Genome sequencing and analysis of the versatile cell factory Aspergillus niger CBS 513.88.</title>
        <authorList>
            <person name="Pel H.J."/>
            <person name="de Winde J.H."/>
            <person name="Archer D.B."/>
            <person name="Dyer P.S."/>
            <person name="Hofmann G."/>
            <person name="Schaap P.J."/>
            <person name="Turner G."/>
            <person name="de Vries R.P."/>
            <person name="Albang R."/>
            <person name="Albermann K."/>
            <person name="Andersen M.R."/>
            <person name="Bendtsen J.D."/>
            <person name="Benen J.A.E."/>
            <person name="van den Berg M."/>
            <person name="Breestraat S."/>
            <person name="Caddick M.X."/>
            <person name="Contreras R."/>
            <person name="Cornell M."/>
            <person name="Coutinho P.M."/>
            <person name="Danchin E.G.J."/>
            <person name="Debets A.J.M."/>
            <person name="Dekker P."/>
            <person name="van Dijck P.W.M."/>
            <person name="van Dijk A."/>
            <person name="Dijkhuizen L."/>
            <person name="Driessen A.J.M."/>
            <person name="d'Enfert C."/>
            <person name="Geysens S."/>
            <person name="Goosen C."/>
            <person name="Groot G.S.P."/>
            <person name="de Groot P.W.J."/>
            <person name="Guillemette T."/>
            <person name="Henrissat B."/>
            <person name="Herweijer M."/>
            <person name="van den Hombergh J.P.T.W."/>
            <person name="van den Hondel C.A.M.J.J."/>
            <person name="van der Heijden R.T.J.M."/>
            <person name="van der Kaaij R.M."/>
            <person name="Klis F.M."/>
            <person name="Kools H.J."/>
            <person name="Kubicek C.P."/>
            <person name="van Kuyk P.A."/>
            <person name="Lauber J."/>
            <person name="Lu X."/>
            <person name="van der Maarel M.J.E.C."/>
            <person name="Meulenberg R."/>
            <person name="Menke H."/>
            <person name="Mortimer M.A."/>
            <person name="Nielsen J."/>
            <person name="Oliver S.G."/>
            <person name="Olsthoorn M."/>
            <person name="Pal K."/>
            <person name="van Peij N.N.M.E."/>
            <person name="Ram A.F.J."/>
            <person name="Rinas U."/>
            <person name="Roubos J.A."/>
            <person name="Sagt C.M.J."/>
            <person name="Schmoll M."/>
            <person name="Sun J."/>
            <person name="Ussery D."/>
            <person name="Varga J."/>
            <person name="Vervecken W."/>
            <person name="van de Vondervoort P.J.J."/>
            <person name="Wedler H."/>
            <person name="Woesten H.A.B."/>
            <person name="Zeng A.-P."/>
            <person name="van Ooyen A.J.J."/>
            <person name="Visser J."/>
            <person name="Stam H."/>
        </authorList>
    </citation>
    <scope>NUCLEOTIDE SEQUENCE [LARGE SCALE GENOMIC DNA]</scope>
    <source>
        <strain>ATCC MYA-4892 / CBS 513.88 / FGSC A1513</strain>
    </source>
</reference>
<keyword id="KW-0961">Cell wall biogenesis/degradation</keyword>
<keyword id="KW-1015">Disulfide bond</keyword>
<keyword id="KW-0325">Glycoprotein</keyword>
<keyword id="KW-0326">Glycosidase</keyword>
<keyword id="KW-0378">Hydrolase</keyword>
<keyword id="KW-1185">Reference proteome</keyword>
<keyword id="KW-0677">Repeat</keyword>
<keyword id="KW-0964">Secreted</keyword>
<keyword id="KW-0732">Signal</keyword>
<feature type="signal peptide" evidence="2">
    <location>
        <begin position="1"/>
        <end position="22"/>
    </location>
</feature>
<feature type="chain" id="PRO_5000220780" description="Probable exopolygalacturonase X">
    <location>
        <begin position="23"/>
        <end position="435"/>
    </location>
</feature>
<feature type="repeat" description="PbH1 1">
    <location>
        <begin position="199"/>
        <end position="229"/>
    </location>
</feature>
<feature type="repeat" description="PbH1 2">
    <location>
        <begin position="230"/>
        <end position="251"/>
    </location>
</feature>
<feature type="repeat" description="PbH1 3">
    <location>
        <begin position="253"/>
        <end position="273"/>
    </location>
</feature>
<feature type="repeat" description="PbH1 4">
    <location>
        <begin position="326"/>
        <end position="347"/>
    </location>
</feature>
<feature type="repeat" description="PbH1 5">
    <location>
        <begin position="361"/>
        <end position="409"/>
    </location>
</feature>
<feature type="region of interest" description="Disordered" evidence="4">
    <location>
        <begin position="31"/>
        <end position="55"/>
    </location>
</feature>
<feature type="compositionally biased region" description="Basic and acidic residues" evidence="4">
    <location>
        <begin position="45"/>
        <end position="55"/>
    </location>
</feature>
<feature type="active site" description="Proton donor" evidence="3">
    <location>
        <position position="244"/>
    </location>
</feature>
<feature type="active site" evidence="3">
    <location>
        <position position="267"/>
    </location>
</feature>
<feature type="glycosylation site" description="N-linked (GlcNAc...) asparagine" evidence="2">
    <location>
        <position position="93"/>
    </location>
</feature>
<feature type="glycosylation site" description="N-linked (GlcNAc...) asparagine" evidence="2">
    <location>
        <position position="112"/>
    </location>
</feature>
<feature type="glycosylation site" description="N-linked (GlcNAc...) asparagine" evidence="2">
    <location>
        <position position="128"/>
    </location>
</feature>
<feature type="glycosylation site" description="N-linked (GlcNAc...) asparagine" evidence="2">
    <location>
        <position position="198"/>
    </location>
</feature>
<feature type="glycosylation site" description="N-linked (GlcNAc...) asparagine" evidence="2">
    <location>
        <position position="252"/>
    </location>
</feature>
<feature type="glycosylation site" description="N-linked (GlcNAc...) asparagine" evidence="2">
    <location>
        <position position="264"/>
    </location>
</feature>
<feature type="glycosylation site" description="N-linked (GlcNAc...) asparagine" evidence="2">
    <location>
        <position position="291"/>
    </location>
</feature>
<feature type="glycosylation site" description="N-linked (GlcNAc...) asparagine" evidence="2">
    <location>
        <position position="296"/>
    </location>
</feature>
<feature type="glycosylation site" description="N-linked (GlcNAc...) asparagine" evidence="2">
    <location>
        <position position="328"/>
    </location>
</feature>
<feature type="glycosylation site" description="N-linked (GlcNAc...) asparagine" evidence="2">
    <location>
        <position position="353"/>
    </location>
</feature>
<feature type="glycosylation site" description="N-linked (GlcNAc...) asparagine" evidence="2">
    <location>
        <position position="406"/>
    </location>
</feature>
<feature type="glycosylation site" description="N-linked (GlcNAc...) asparagine" evidence="2">
    <location>
        <position position="429"/>
    </location>
</feature>
<feature type="disulfide bond" evidence="1">
    <location>
        <begin position="246"/>
        <end position="263"/>
    </location>
</feature>
<feature type="disulfide bond" evidence="1">
    <location>
        <begin position="391"/>
        <end position="397"/>
    </location>
</feature>